<sequence length="451" mass="50055">MNLVVIGVNHKTAPVALRERLAFVGGDIQVAQAQLQQITAGSLIISTCNRTEIYALAPSTQLLANSDAALSKQSDLSLADEPVSTVDLTEQLITWLADFKQVPLEETRPYLYDYVDGQALTHMLRVAAGLDSMILGEPQIFGQIKRSVNQAKEQGFLTNQLNWVVEQIFAAAKRVRNETDVGTQAISLGYAASKLVTQIFDRPEETTFLLIAAGEMNRLVAQNIAGLGVKRILICNRTPERANLLAQELAHLGIQIEVHPLTELDSLLYQADIVSSCSGSMDMLIDKAMTRRALKKRRYKPMLMVDLAVPRDIDSSVGKLDDVYLYSIDDLQHVIAGNLEKRRQAAVEAELLVSHLVVEIERRFQVRKVGQDIHDYRALAAQKAEAVLNEALHELRTSEATAEEVMTELTRRLTQTLVHAPSSLMRRAARDGNNEAIDLIILGLKDAYRKK</sequence>
<feature type="chain" id="PRO_1000071248" description="Glutamyl-tRNA reductase">
    <location>
        <begin position="1"/>
        <end position="451"/>
    </location>
</feature>
<feature type="active site" description="Nucleophile" evidence="1">
    <location>
        <position position="48"/>
    </location>
</feature>
<feature type="binding site" evidence="1">
    <location>
        <begin position="47"/>
        <end position="50"/>
    </location>
    <ligand>
        <name>substrate</name>
    </ligand>
</feature>
<feature type="binding site" evidence="1">
    <location>
        <position position="132"/>
    </location>
    <ligand>
        <name>substrate</name>
    </ligand>
</feature>
<feature type="binding site" evidence="1">
    <location>
        <begin position="137"/>
        <end position="139"/>
    </location>
    <ligand>
        <name>substrate</name>
    </ligand>
</feature>
<feature type="binding site" evidence="1">
    <location>
        <position position="143"/>
    </location>
    <ligand>
        <name>substrate</name>
    </ligand>
</feature>
<feature type="binding site" evidence="1">
    <location>
        <begin position="212"/>
        <end position="217"/>
    </location>
    <ligand>
        <name>NADP(+)</name>
        <dbReference type="ChEBI" id="CHEBI:58349"/>
    </ligand>
</feature>
<feature type="site" description="Important for activity" evidence="1">
    <location>
        <position position="122"/>
    </location>
</feature>
<proteinExistence type="inferred from homology"/>
<keyword id="KW-0521">NADP</keyword>
<keyword id="KW-0560">Oxidoreductase</keyword>
<keyword id="KW-0627">Porphyrin biosynthesis</keyword>
<protein>
    <recommendedName>
        <fullName evidence="1">Glutamyl-tRNA reductase</fullName>
        <shortName evidence="1">GluTR</shortName>
        <ecNumber evidence="1">1.2.1.70</ecNumber>
    </recommendedName>
</protein>
<accession>A5WC75</accession>
<reference key="1">
    <citation type="submission" date="2007-05" db="EMBL/GenBank/DDBJ databases">
        <title>Complete sequence of chromosome of Psychrobacter sp. PRwf-1.</title>
        <authorList>
            <consortium name="US DOE Joint Genome Institute"/>
            <person name="Copeland A."/>
            <person name="Lucas S."/>
            <person name="Lapidus A."/>
            <person name="Barry K."/>
            <person name="Detter J.C."/>
            <person name="Glavina del Rio T."/>
            <person name="Hammon N."/>
            <person name="Israni S."/>
            <person name="Dalin E."/>
            <person name="Tice H."/>
            <person name="Pitluck S."/>
            <person name="Chain P."/>
            <person name="Malfatti S."/>
            <person name="Shin M."/>
            <person name="Vergez L."/>
            <person name="Schmutz J."/>
            <person name="Larimer F."/>
            <person name="Land M."/>
            <person name="Hauser L."/>
            <person name="Kyrpides N."/>
            <person name="Kim E."/>
            <person name="Tiedje J."/>
            <person name="Richardson P."/>
        </authorList>
    </citation>
    <scope>NUCLEOTIDE SEQUENCE [LARGE SCALE GENOMIC DNA]</scope>
    <source>
        <strain>PRwf-1</strain>
    </source>
</reference>
<gene>
    <name evidence="1" type="primary">hemA</name>
    <name type="ordered locus">PsycPRwf_0311</name>
</gene>
<name>HEM1_PSYWF</name>
<comment type="function">
    <text evidence="1">Catalyzes the NADPH-dependent reduction of glutamyl-tRNA(Glu) to glutamate 1-semialdehyde (GSA).</text>
</comment>
<comment type="catalytic activity">
    <reaction evidence="1">
        <text>(S)-4-amino-5-oxopentanoate + tRNA(Glu) + NADP(+) = L-glutamyl-tRNA(Glu) + NADPH + H(+)</text>
        <dbReference type="Rhea" id="RHEA:12344"/>
        <dbReference type="Rhea" id="RHEA-COMP:9663"/>
        <dbReference type="Rhea" id="RHEA-COMP:9680"/>
        <dbReference type="ChEBI" id="CHEBI:15378"/>
        <dbReference type="ChEBI" id="CHEBI:57501"/>
        <dbReference type="ChEBI" id="CHEBI:57783"/>
        <dbReference type="ChEBI" id="CHEBI:58349"/>
        <dbReference type="ChEBI" id="CHEBI:78442"/>
        <dbReference type="ChEBI" id="CHEBI:78520"/>
        <dbReference type="EC" id="1.2.1.70"/>
    </reaction>
</comment>
<comment type="pathway">
    <text evidence="1">Porphyrin-containing compound metabolism; protoporphyrin-IX biosynthesis; 5-aminolevulinate from L-glutamyl-tRNA(Glu): step 1/2.</text>
</comment>
<comment type="subunit">
    <text evidence="1">Homodimer.</text>
</comment>
<comment type="domain">
    <text evidence="1">Possesses an unusual extended V-shaped dimeric structure with each monomer consisting of three distinct domains arranged along a curved 'spinal' alpha-helix. The N-terminal catalytic domain specifically recognizes the glutamate moiety of the substrate. The second domain is the NADPH-binding domain, and the third C-terminal domain is responsible for dimerization.</text>
</comment>
<comment type="miscellaneous">
    <text evidence="1">During catalysis, the active site Cys acts as a nucleophile attacking the alpha-carbonyl group of tRNA-bound glutamate with the formation of a thioester intermediate between enzyme and glutamate, and the concomitant release of tRNA(Glu). The thioester intermediate is finally reduced by direct hydride transfer from NADPH, to form the product GSA.</text>
</comment>
<comment type="similarity">
    <text evidence="1">Belongs to the glutamyl-tRNA reductase family.</text>
</comment>
<evidence type="ECO:0000255" key="1">
    <source>
        <dbReference type="HAMAP-Rule" id="MF_00087"/>
    </source>
</evidence>
<organism>
    <name type="scientific">Psychrobacter sp. (strain PRwf-1)</name>
    <dbReference type="NCBI Taxonomy" id="349106"/>
    <lineage>
        <taxon>Bacteria</taxon>
        <taxon>Pseudomonadati</taxon>
        <taxon>Pseudomonadota</taxon>
        <taxon>Gammaproteobacteria</taxon>
        <taxon>Moraxellales</taxon>
        <taxon>Moraxellaceae</taxon>
        <taxon>Psychrobacter</taxon>
    </lineage>
</organism>
<dbReference type="EC" id="1.2.1.70" evidence="1"/>
<dbReference type="EMBL" id="CP000713">
    <property type="protein sequence ID" value="ABQ93266.1"/>
    <property type="molecule type" value="Genomic_DNA"/>
</dbReference>
<dbReference type="SMR" id="A5WC75"/>
<dbReference type="STRING" id="349106.PsycPRwf_0311"/>
<dbReference type="KEGG" id="prw:PsycPRwf_0311"/>
<dbReference type="eggNOG" id="COG0373">
    <property type="taxonomic scope" value="Bacteria"/>
</dbReference>
<dbReference type="HOGENOM" id="CLU_035113_2_2_6"/>
<dbReference type="UniPathway" id="UPA00251">
    <property type="reaction ID" value="UER00316"/>
</dbReference>
<dbReference type="GO" id="GO:0008883">
    <property type="term" value="F:glutamyl-tRNA reductase activity"/>
    <property type="evidence" value="ECO:0007669"/>
    <property type="project" value="UniProtKB-UniRule"/>
</dbReference>
<dbReference type="GO" id="GO:0050661">
    <property type="term" value="F:NADP binding"/>
    <property type="evidence" value="ECO:0007669"/>
    <property type="project" value="InterPro"/>
</dbReference>
<dbReference type="GO" id="GO:0019353">
    <property type="term" value="P:protoporphyrinogen IX biosynthetic process from glutamate"/>
    <property type="evidence" value="ECO:0007669"/>
    <property type="project" value="TreeGrafter"/>
</dbReference>
<dbReference type="CDD" id="cd05213">
    <property type="entry name" value="NAD_bind_Glutamyl_tRNA_reduct"/>
    <property type="match status" value="1"/>
</dbReference>
<dbReference type="FunFam" id="3.30.460.30:FF:000001">
    <property type="entry name" value="Glutamyl-tRNA reductase"/>
    <property type="match status" value="1"/>
</dbReference>
<dbReference type="FunFam" id="3.40.50.720:FF:000031">
    <property type="entry name" value="Glutamyl-tRNA reductase"/>
    <property type="match status" value="1"/>
</dbReference>
<dbReference type="Gene3D" id="3.30.460.30">
    <property type="entry name" value="Glutamyl-tRNA reductase, N-terminal domain"/>
    <property type="match status" value="1"/>
</dbReference>
<dbReference type="Gene3D" id="3.40.50.720">
    <property type="entry name" value="NAD(P)-binding Rossmann-like Domain"/>
    <property type="match status" value="1"/>
</dbReference>
<dbReference type="HAMAP" id="MF_00087">
    <property type="entry name" value="Glu_tRNA_reductase"/>
    <property type="match status" value="1"/>
</dbReference>
<dbReference type="InterPro" id="IPR000343">
    <property type="entry name" value="4pyrrol_synth_GluRdtase"/>
</dbReference>
<dbReference type="InterPro" id="IPR015896">
    <property type="entry name" value="4pyrrol_synth_GluRdtase_dimer"/>
</dbReference>
<dbReference type="InterPro" id="IPR015895">
    <property type="entry name" value="4pyrrol_synth_GluRdtase_N"/>
</dbReference>
<dbReference type="InterPro" id="IPR036453">
    <property type="entry name" value="GluRdtase_dimer_dom_sf"/>
</dbReference>
<dbReference type="InterPro" id="IPR036343">
    <property type="entry name" value="GluRdtase_N_sf"/>
</dbReference>
<dbReference type="InterPro" id="IPR036291">
    <property type="entry name" value="NAD(P)-bd_dom_sf"/>
</dbReference>
<dbReference type="InterPro" id="IPR006151">
    <property type="entry name" value="Shikm_DH/Glu-tRNA_Rdtase"/>
</dbReference>
<dbReference type="NCBIfam" id="TIGR01035">
    <property type="entry name" value="hemA"/>
    <property type="match status" value="1"/>
</dbReference>
<dbReference type="PANTHER" id="PTHR43013">
    <property type="entry name" value="GLUTAMYL-TRNA REDUCTASE"/>
    <property type="match status" value="1"/>
</dbReference>
<dbReference type="PANTHER" id="PTHR43013:SF1">
    <property type="entry name" value="GLUTAMYL-TRNA REDUCTASE"/>
    <property type="match status" value="1"/>
</dbReference>
<dbReference type="Pfam" id="PF00745">
    <property type="entry name" value="GlutR_dimer"/>
    <property type="match status" value="1"/>
</dbReference>
<dbReference type="Pfam" id="PF05201">
    <property type="entry name" value="GlutR_N"/>
    <property type="match status" value="1"/>
</dbReference>
<dbReference type="Pfam" id="PF01488">
    <property type="entry name" value="Shikimate_DH"/>
    <property type="match status" value="1"/>
</dbReference>
<dbReference type="PIRSF" id="PIRSF000445">
    <property type="entry name" value="4pyrrol_synth_GluRdtase"/>
    <property type="match status" value="1"/>
</dbReference>
<dbReference type="SUPFAM" id="SSF69742">
    <property type="entry name" value="Glutamyl tRNA-reductase catalytic, N-terminal domain"/>
    <property type="match status" value="1"/>
</dbReference>
<dbReference type="SUPFAM" id="SSF69075">
    <property type="entry name" value="Glutamyl tRNA-reductase dimerization domain"/>
    <property type="match status" value="1"/>
</dbReference>
<dbReference type="SUPFAM" id="SSF51735">
    <property type="entry name" value="NAD(P)-binding Rossmann-fold domains"/>
    <property type="match status" value="1"/>
</dbReference>